<proteinExistence type="evidence at protein level"/>
<keyword id="KW-1003">Cell membrane</keyword>
<keyword id="KW-1015">Disulfide bond</keyword>
<keyword id="KW-0325">Glycoprotein</keyword>
<keyword id="KW-0336">GPI-anchor</keyword>
<keyword id="KW-0449">Lipoprotein</keyword>
<keyword id="KW-0472">Membrane</keyword>
<keyword id="KW-1185">Reference proteome</keyword>
<keyword id="KW-0732">Signal</keyword>
<reference key="1">
    <citation type="journal article" date="1998" name="Proc. Natl. Acad. Sci. U.S.A.">
        <title>Prostate stem cell antigen: a cell surface marker overexpressed in prostate cancer.</title>
        <authorList>
            <person name="Reiter R.E."/>
            <person name="Gu Z."/>
            <person name="Watabe T."/>
            <person name="Thomas G."/>
            <person name="Szigeti K."/>
            <person name="Davis E."/>
            <person name="Wahl M."/>
            <person name="Nisitani S."/>
            <person name="Yamashiro J."/>
            <person name="le Beau M.M."/>
            <person name="Losa M."/>
            <person name="Witte O.N."/>
        </authorList>
    </citation>
    <scope>NUCLEOTIDE SEQUENCE</scope>
    <source>
        <tissue>Fetus</tissue>
        <tissue>Kidney</tissue>
    </source>
</reference>
<reference key="2">
    <citation type="journal article" date="2001" name="Cancer Res.">
        <title>Murine six-transmembrane epithelial antigen of the prostate, prostate stem cell antigen, and prostate-specific membrane antigen: prostate-specific cell-surface antigens highly expressed in prostate cancer of transgenic adenocarcinoma mouse prostate mice.</title>
        <authorList>
            <person name="Yang D."/>
            <person name="Holt G.E."/>
            <person name="Velders M.P."/>
            <person name="Kwon E.D."/>
            <person name="Kast W.M."/>
        </authorList>
    </citation>
    <scope>NUCLEOTIDE SEQUENCE [MRNA]</scope>
    <source>
        <strain>C57BL/6J</strain>
    </source>
</reference>
<reference key="3">
    <citation type="journal article" date="2005" name="Science">
        <title>The transcriptional landscape of the mammalian genome.</title>
        <authorList>
            <person name="Carninci P."/>
            <person name="Kasukawa T."/>
            <person name="Katayama S."/>
            <person name="Gough J."/>
            <person name="Frith M.C."/>
            <person name="Maeda N."/>
            <person name="Oyama R."/>
            <person name="Ravasi T."/>
            <person name="Lenhard B."/>
            <person name="Wells C."/>
            <person name="Kodzius R."/>
            <person name="Shimokawa K."/>
            <person name="Bajic V.B."/>
            <person name="Brenner S.E."/>
            <person name="Batalov S."/>
            <person name="Forrest A.R."/>
            <person name="Zavolan M."/>
            <person name="Davis M.J."/>
            <person name="Wilming L.G."/>
            <person name="Aidinis V."/>
            <person name="Allen J.E."/>
            <person name="Ambesi-Impiombato A."/>
            <person name="Apweiler R."/>
            <person name="Aturaliya R.N."/>
            <person name="Bailey T.L."/>
            <person name="Bansal M."/>
            <person name="Baxter L."/>
            <person name="Beisel K.W."/>
            <person name="Bersano T."/>
            <person name="Bono H."/>
            <person name="Chalk A.M."/>
            <person name="Chiu K.P."/>
            <person name="Choudhary V."/>
            <person name="Christoffels A."/>
            <person name="Clutterbuck D.R."/>
            <person name="Crowe M.L."/>
            <person name="Dalla E."/>
            <person name="Dalrymple B.P."/>
            <person name="de Bono B."/>
            <person name="Della Gatta G."/>
            <person name="di Bernardo D."/>
            <person name="Down T."/>
            <person name="Engstrom P."/>
            <person name="Fagiolini M."/>
            <person name="Faulkner G."/>
            <person name="Fletcher C.F."/>
            <person name="Fukushima T."/>
            <person name="Furuno M."/>
            <person name="Futaki S."/>
            <person name="Gariboldi M."/>
            <person name="Georgii-Hemming P."/>
            <person name="Gingeras T.R."/>
            <person name="Gojobori T."/>
            <person name="Green R.E."/>
            <person name="Gustincich S."/>
            <person name="Harbers M."/>
            <person name="Hayashi Y."/>
            <person name="Hensch T.K."/>
            <person name="Hirokawa N."/>
            <person name="Hill D."/>
            <person name="Huminiecki L."/>
            <person name="Iacono M."/>
            <person name="Ikeo K."/>
            <person name="Iwama A."/>
            <person name="Ishikawa T."/>
            <person name="Jakt M."/>
            <person name="Kanapin A."/>
            <person name="Katoh M."/>
            <person name="Kawasawa Y."/>
            <person name="Kelso J."/>
            <person name="Kitamura H."/>
            <person name="Kitano H."/>
            <person name="Kollias G."/>
            <person name="Krishnan S.P."/>
            <person name="Kruger A."/>
            <person name="Kummerfeld S.K."/>
            <person name="Kurochkin I.V."/>
            <person name="Lareau L.F."/>
            <person name="Lazarevic D."/>
            <person name="Lipovich L."/>
            <person name="Liu J."/>
            <person name="Liuni S."/>
            <person name="McWilliam S."/>
            <person name="Madan Babu M."/>
            <person name="Madera M."/>
            <person name="Marchionni L."/>
            <person name="Matsuda H."/>
            <person name="Matsuzawa S."/>
            <person name="Miki H."/>
            <person name="Mignone F."/>
            <person name="Miyake S."/>
            <person name="Morris K."/>
            <person name="Mottagui-Tabar S."/>
            <person name="Mulder N."/>
            <person name="Nakano N."/>
            <person name="Nakauchi H."/>
            <person name="Ng P."/>
            <person name="Nilsson R."/>
            <person name="Nishiguchi S."/>
            <person name="Nishikawa S."/>
            <person name="Nori F."/>
            <person name="Ohara O."/>
            <person name="Okazaki Y."/>
            <person name="Orlando V."/>
            <person name="Pang K.C."/>
            <person name="Pavan W.J."/>
            <person name="Pavesi G."/>
            <person name="Pesole G."/>
            <person name="Petrovsky N."/>
            <person name="Piazza S."/>
            <person name="Reed J."/>
            <person name="Reid J.F."/>
            <person name="Ring B.Z."/>
            <person name="Ringwald M."/>
            <person name="Rost B."/>
            <person name="Ruan Y."/>
            <person name="Salzberg S.L."/>
            <person name="Sandelin A."/>
            <person name="Schneider C."/>
            <person name="Schoenbach C."/>
            <person name="Sekiguchi K."/>
            <person name="Semple C.A."/>
            <person name="Seno S."/>
            <person name="Sessa L."/>
            <person name="Sheng Y."/>
            <person name="Shibata Y."/>
            <person name="Shimada H."/>
            <person name="Shimada K."/>
            <person name="Silva D."/>
            <person name="Sinclair B."/>
            <person name="Sperling S."/>
            <person name="Stupka E."/>
            <person name="Sugiura K."/>
            <person name="Sultana R."/>
            <person name="Takenaka Y."/>
            <person name="Taki K."/>
            <person name="Tammoja K."/>
            <person name="Tan S.L."/>
            <person name="Tang S."/>
            <person name="Taylor M.S."/>
            <person name="Tegner J."/>
            <person name="Teichmann S.A."/>
            <person name="Ueda H.R."/>
            <person name="van Nimwegen E."/>
            <person name="Verardo R."/>
            <person name="Wei C.L."/>
            <person name="Yagi K."/>
            <person name="Yamanishi H."/>
            <person name="Zabarovsky E."/>
            <person name="Zhu S."/>
            <person name="Zimmer A."/>
            <person name="Hide W."/>
            <person name="Bult C."/>
            <person name="Grimmond S.M."/>
            <person name="Teasdale R.D."/>
            <person name="Liu E.T."/>
            <person name="Brusic V."/>
            <person name="Quackenbush J."/>
            <person name="Wahlestedt C."/>
            <person name="Mattick J.S."/>
            <person name="Hume D.A."/>
            <person name="Kai C."/>
            <person name="Sasaki D."/>
            <person name="Tomaru Y."/>
            <person name="Fukuda S."/>
            <person name="Kanamori-Katayama M."/>
            <person name="Suzuki M."/>
            <person name="Aoki J."/>
            <person name="Arakawa T."/>
            <person name="Iida J."/>
            <person name="Imamura K."/>
            <person name="Itoh M."/>
            <person name="Kato T."/>
            <person name="Kawaji H."/>
            <person name="Kawagashira N."/>
            <person name="Kawashima T."/>
            <person name="Kojima M."/>
            <person name="Kondo S."/>
            <person name="Konno H."/>
            <person name="Nakano K."/>
            <person name="Ninomiya N."/>
            <person name="Nishio T."/>
            <person name="Okada M."/>
            <person name="Plessy C."/>
            <person name="Shibata K."/>
            <person name="Shiraki T."/>
            <person name="Suzuki S."/>
            <person name="Tagami M."/>
            <person name="Waki K."/>
            <person name="Watahiki A."/>
            <person name="Okamura-Oho Y."/>
            <person name="Suzuki H."/>
            <person name="Kawai J."/>
            <person name="Hayashizaki Y."/>
        </authorList>
    </citation>
    <scope>NUCLEOTIDE SEQUENCE [LARGE SCALE MRNA]</scope>
    <source>
        <strain>C57BL/6J</strain>
        <tissue>Stomach</tissue>
    </source>
</reference>
<reference key="4">
    <citation type="journal article" date="2009" name="PLoS Biol.">
        <title>Lineage-specific biology revealed by a finished genome assembly of the mouse.</title>
        <authorList>
            <person name="Church D.M."/>
            <person name="Goodstadt L."/>
            <person name="Hillier L.W."/>
            <person name="Zody M.C."/>
            <person name="Goldstein S."/>
            <person name="She X."/>
            <person name="Bult C.J."/>
            <person name="Agarwala R."/>
            <person name="Cherry J.L."/>
            <person name="DiCuccio M."/>
            <person name="Hlavina W."/>
            <person name="Kapustin Y."/>
            <person name="Meric P."/>
            <person name="Maglott D."/>
            <person name="Birtle Z."/>
            <person name="Marques A.C."/>
            <person name="Graves T."/>
            <person name="Zhou S."/>
            <person name="Teague B."/>
            <person name="Potamousis K."/>
            <person name="Churas C."/>
            <person name="Place M."/>
            <person name="Herschleb J."/>
            <person name="Runnheim R."/>
            <person name="Forrest D."/>
            <person name="Amos-Landgraf J."/>
            <person name="Schwartz D.C."/>
            <person name="Cheng Z."/>
            <person name="Lindblad-Toh K."/>
            <person name="Eichler E.E."/>
            <person name="Ponting C.P."/>
        </authorList>
    </citation>
    <scope>NUCLEOTIDE SEQUENCE [LARGE SCALE GENOMIC DNA]</scope>
    <source>
        <strain>C57BL/6J</strain>
    </source>
</reference>
<reference key="5">
    <citation type="submission" date="2002-07" db="EMBL/GenBank/DDBJ databases">
        <authorList>
            <person name="Mural R.J."/>
            <person name="Adams M.D."/>
            <person name="Myers E.W."/>
            <person name="Smith H.O."/>
            <person name="Venter J.C."/>
        </authorList>
    </citation>
    <scope>NUCLEOTIDE SEQUENCE [LARGE SCALE GENOMIC DNA]</scope>
</reference>
<reference key="6">
    <citation type="journal article" date="2004" name="Genome Res.">
        <title>The status, quality, and expansion of the NIH full-length cDNA project: the Mammalian Gene Collection (MGC).</title>
        <authorList>
            <consortium name="The MGC Project Team"/>
        </authorList>
    </citation>
    <scope>NUCLEOTIDE SEQUENCE [LARGE SCALE MRNA]</scope>
</reference>
<reference key="7">
    <citation type="journal article" date="2015" name="Neurobiol. Aging">
        <title>Prostate stem cell antigen interacts with nicotinic acetylcholine receptors and is affected in Alzheimer's disease.</title>
        <authorList>
            <person name="Jensen M.M."/>
            <person name="Arvaniti M."/>
            <person name="Mikkelsen J.D."/>
            <person name="Michalski D."/>
            <person name="Pinborg L.H."/>
            <person name="Haertig W."/>
            <person name="Thomsen M.S."/>
        </authorList>
    </citation>
    <scope>TISSUE SPECIFICITY</scope>
</reference>
<comment type="function">
    <text evidence="1">May be involved in the regulation of cell proliferation.</text>
</comment>
<comment type="function">
    <text evidence="2">May act as a modulator of nicotinic acetylcholine receptors (nAChRs) activity. In vitro inhibits nicotine-induced signaling probably implicating alpha-3:beta-2- or alpha-7-containing nAChRs.</text>
</comment>
<comment type="subunit">
    <text evidence="2">Interacts with CHRNA4.</text>
</comment>
<comment type="subcellular location">
    <subcellularLocation>
        <location evidence="2">Cell membrane</location>
        <topology evidence="2">Lipid-anchor</topology>
        <topology evidence="2">GPI-anchor</topology>
    </subcellularLocation>
</comment>
<comment type="tissue specificity">
    <text evidence="5">Predominantly expressed in prostate. Also found in spleen, liver, lung, prostate, kidney and testis. Expressed in brain cortex; expression is increased in transgenic mouse model of Alzheimer disease (at protein level).</text>
</comment>
<name>PSCA_MOUSE</name>
<dbReference type="EMBL" id="AF319173">
    <property type="protein sequence ID" value="AAK84073.1"/>
    <property type="molecule type" value="mRNA"/>
</dbReference>
<dbReference type="EMBL" id="AK008851">
    <property type="protein sequence ID" value="BAB25929.1"/>
    <property type="molecule type" value="mRNA"/>
</dbReference>
<dbReference type="EMBL" id="AC118022">
    <property type="status" value="NOT_ANNOTATED_CDS"/>
    <property type="molecule type" value="Genomic_DNA"/>
</dbReference>
<dbReference type="EMBL" id="CH466545">
    <property type="protein sequence ID" value="EDL29439.1"/>
    <property type="molecule type" value="Genomic_DNA"/>
</dbReference>
<dbReference type="EMBL" id="BC110462">
    <property type="protein sequence ID" value="AAI10463.1"/>
    <property type="molecule type" value="mRNA"/>
</dbReference>
<dbReference type="CCDS" id="CCDS27526.1"/>
<dbReference type="RefSeq" id="NP_082492.1">
    <property type="nucleotide sequence ID" value="NM_028216.2"/>
</dbReference>
<dbReference type="SMR" id="P57096"/>
<dbReference type="FunCoup" id="P57096">
    <property type="interactions" value="840"/>
</dbReference>
<dbReference type="IntAct" id="P57096">
    <property type="interactions" value="1"/>
</dbReference>
<dbReference type="STRING" id="10090.ENSMUSP00000023265"/>
<dbReference type="GlyCosmos" id="P57096">
    <property type="glycosylation" value="1 site, No reported glycans"/>
</dbReference>
<dbReference type="GlyGen" id="P57096">
    <property type="glycosylation" value="1 site"/>
</dbReference>
<dbReference type="PhosphoSitePlus" id="P57096"/>
<dbReference type="PaxDb" id="10090-ENSMUSP00000023265"/>
<dbReference type="PeptideAtlas" id="P57096"/>
<dbReference type="ProteomicsDB" id="291657"/>
<dbReference type="Antibodypedia" id="7385">
    <property type="antibodies" value="409 antibodies from 39 providers"/>
</dbReference>
<dbReference type="Ensembl" id="ENSMUST00000023265.5">
    <property type="protein sequence ID" value="ENSMUSP00000023265.4"/>
    <property type="gene ID" value="ENSMUSG00000022598.7"/>
</dbReference>
<dbReference type="GeneID" id="72373"/>
<dbReference type="KEGG" id="mmu:72373"/>
<dbReference type="UCSC" id="uc007wfr.2">
    <property type="organism name" value="mouse"/>
</dbReference>
<dbReference type="AGR" id="MGI:1919623"/>
<dbReference type="CTD" id="8000"/>
<dbReference type="MGI" id="MGI:1919623">
    <property type="gene designation" value="Psca"/>
</dbReference>
<dbReference type="VEuPathDB" id="HostDB:ENSMUSG00000022598"/>
<dbReference type="eggNOG" id="ENOG502SCWD">
    <property type="taxonomic scope" value="Eukaryota"/>
</dbReference>
<dbReference type="GeneTree" id="ENSGT00940000153378"/>
<dbReference type="InParanoid" id="P57096"/>
<dbReference type="OMA" id="ISKGCTS"/>
<dbReference type="OrthoDB" id="5945173at2759"/>
<dbReference type="PhylomeDB" id="P57096"/>
<dbReference type="TreeFam" id="TF336080"/>
<dbReference type="Reactome" id="R-MMU-163125">
    <property type="pathway name" value="Post-translational modification: synthesis of GPI-anchored proteins"/>
</dbReference>
<dbReference type="BioGRID-ORCS" id="72373">
    <property type="hits" value="2 hits in 76 CRISPR screens"/>
</dbReference>
<dbReference type="ChiTaRS" id="Psca">
    <property type="organism name" value="mouse"/>
</dbReference>
<dbReference type="PRO" id="PR:P57096"/>
<dbReference type="Proteomes" id="UP000000589">
    <property type="component" value="Chromosome 15"/>
</dbReference>
<dbReference type="RNAct" id="P57096">
    <property type="molecule type" value="protein"/>
</dbReference>
<dbReference type="Bgee" id="ENSMUSG00000022598">
    <property type="expression patterns" value="Expressed in epithelium of stomach and 63 other cell types or tissues"/>
</dbReference>
<dbReference type="GO" id="GO:0016020">
    <property type="term" value="C:membrane"/>
    <property type="evidence" value="ECO:0000304"/>
    <property type="project" value="MGI"/>
</dbReference>
<dbReference type="GO" id="GO:0005886">
    <property type="term" value="C:plasma membrane"/>
    <property type="evidence" value="ECO:0007669"/>
    <property type="project" value="UniProtKB-SubCell"/>
</dbReference>
<dbReference type="GO" id="GO:0098552">
    <property type="term" value="C:side of membrane"/>
    <property type="evidence" value="ECO:0007669"/>
    <property type="project" value="UniProtKB-KW"/>
</dbReference>
<dbReference type="GO" id="GO:0033130">
    <property type="term" value="F:acetylcholine receptor binding"/>
    <property type="evidence" value="ECO:0007669"/>
    <property type="project" value="Ensembl"/>
</dbReference>
<dbReference type="GO" id="GO:0070373">
    <property type="term" value="P:negative regulation of ERK1 and ERK2 cascade"/>
    <property type="evidence" value="ECO:0007669"/>
    <property type="project" value="Ensembl"/>
</dbReference>
<dbReference type="CDD" id="cd23573">
    <property type="entry name" value="TFP_LU_ECD_PSCA"/>
    <property type="match status" value="1"/>
</dbReference>
<dbReference type="FunFam" id="2.10.60.10:FF:000003">
    <property type="entry name" value="lymphocyte antigen 6E isoform X1"/>
    <property type="match status" value="1"/>
</dbReference>
<dbReference type="Gene3D" id="2.10.60.10">
    <property type="entry name" value="CD59"/>
    <property type="match status" value="1"/>
</dbReference>
<dbReference type="InterPro" id="IPR018363">
    <property type="entry name" value="CD59_antigen_CS"/>
</dbReference>
<dbReference type="InterPro" id="IPR051110">
    <property type="entry name" value="Ly-6/neurotoxin-like_GPI-ap"/>
</dbReference>
<dbReference type="InterPro" id="IPR016054">
    <property type="entry name" value="LY6_UPA_recep-like"/>
</dbReference>
<dbReference type="InterPro" id="IPR045860">
    <property type="entry name" value="Snake_toxin-like_sf"/>
</dbReference>
<dbReference type="InterPro" id="IPR035076">
    <property type="entry name" value="Toxin/TOLIP"/>
</dbReference>
<dbReference type="PANTHER" id="PTHR16983:SF1">
    <property type="entry name" value="PROSTATE STEM CELL ANTIGEN"/>
    <property type="match status" value="1"/>
</dbReference>
<dbReference type="PANTHER" id="PTHR16983">
    <property type="entry name" value="UPAR/LY6 DOMAIN-CONTAINING PROTEIN"/>
    <property type="match status" value="1"/>
</dbReference>
<dbReference type="Pfam" id="PF00087">
    <property type="entry name" value="Toxin_TOLIP"/>
    <property type="match status" value="1"/>
</dbReference>
<dbReference type="SMART" id="SM00134">
    <property type="entry name" value="LU"/>
    <property type="match status" value="1"/>
</dbReference>
<dbReference type="SUPFAM" id="SSF57302">
    <property type="entry name" value="Snake toxin-like"/>
    <property type="match status" value="1"/>
</dbReference>
<dbReference type="PROSITE" id="PS00983">
    <property type="entry name" value="LY6_UPAR"/>
    <property type="match status" value="1"/>
</dbReference>
<evidence type="ECO:0000250" key="1"/>
<evidence type="ECO:0000250" key="2">
    <source>
        <dbReference type="UniProtKB" id="O43653"/>
    </source>
</evidence>
<evidence type="ECO:0000250" key="3">
    <source>
        <dbReference type="UniProtKB" id="P0DP57"/>
    </source>
</evidence>
<evidence type="ECO:0000255" key="4">
    <source>
        <dbReference type="PROSITE-ProRule" id="PRU00498"/>
    </source>
</evidence>
<evidence type="ECO:0000269" key="5">
    <source>
    </source>
</evidence>
<gene>
    <name type="primary">Psca</name>
</gene>
<organism>
    <name type="scientific">Mus musculus</name>
    <name type="common">Mouse</name>
    <dbReference type="NCBI Taxonomy" id="10090"/>
    <lineage>
        <taxon>Eukaryota</taxon>
        <taxon>Metazoa</taxon>
        <taxon>Chordata</taxon>
        <taxon>Craniata</taxon>
        <taxon>Vertebrata</taxon>
        <taxon>Euteleostomi</taxon>
        <taxon>Mammalia</taxon>
        <taxon>Eutheria</taxon>
        <taxon>Euarchontoglires</taxon>
        <taxon>Glires</taxon>
        <taxon>Rodentia</taxon>
        <taxon>Myomorpha</taxon>
        <taxon>Muroidea</taxon>
        <taxon>Muridae</taxon>
        <taxon>Murinae</taxon>
        <taxon>Mus</taxon>
        <taxon>Mus</taxon>
    </lineage>
</organism>
<accession>P57096</accession>
<accession>Q9D7U0</accession>
<feature type="signal peptide" evidence="2">
    <location>
        <begin position="1"/>
        <end position="20"/>
    </location>
</feature>
<feature type="chain" id="PRO_0000036164" description="Prostate stem cell antigen">
    <location>
        <begin position="21"/>
        <end position="95"/>
    </location>
</feature>
<feature type="propeptide" id="PRO_0000036165" description="Removed in mature form" evidence="1">
    <location>
        <begin position="96"/>
        <end position="123"/>
    </location>
</feature>
<feature type="domain" description="UPAR/Ly6">
    <location>
        <begin position="21"/>
        <end position="95"/>
    </location>
</feature>
<feature type="lipid moiety-binding region" description="GPI-anchor amidated asparagine" evidence="1">
    <location>
        <position position="95"/>
    </location>
</feature>
<feature type="glycosylation site" description="N-linked (GlcNAc...) asparagine" evidence="4">
    <location>
        <position position="40"/>
    </location>
</feature>
<feature type="disulfide bond" evidence="3">
    <location>
        <begin position="23"/>
        <end position="48"/>
    </location>
</feature>
<feature type="disulfide bond" evidence="3">
    <location>
        <begin position="26"/>
        <end position="35"/>
    </location>
</feature>
<feature type="disulfide bond" evidence="3">
    <location>
        <begin position="41"/>
        <end position="66"/>
    </location>
</feature>
<feature type="disulfide bond" evidence="3">
    <location>
        <begin position="70"/>
        <end position="86"/>
    </location>
</feature>
<feature type="disulfide bond" evidence="3">
    <location>
        <begin position="87"/>
        <end position="92"/>
    </location>
</feature>
<feature type="sequence conflict" description="In Ref. 1." ref="1">
    <original>F</original>
    <variation>L</variation>
    <location>
        <position position="5"/>
    </location>
</feature>
<protein>
    <recommendedName>
        <fullName>Prostate stem cell antigen</fullName>
    </recommendedName>
</protein>
<sequence length="123" mass="13478">MKTVFFLLLATYLALHPGAALQCYSCTAQMNNRDCLNVQNCSLDQHSCFTSRIRAIGLVTVISKGCSSQCEDDSENYYLGKKNITCCYSDLCNVNGAHTLKPPTTLGLLTVLCSLLLWGSSRL</sequence>